<reference key="1">
    <citation type="journal article" date="2003" name="Proc. Natl. Acad. Sci. U.S.A.">
        <title>The genome sequence of Clostridium tetani, the causative agent of tetanus disease.</title>
        <authorList>
            <person name="Brueggemann H."/>
            <person name="Baeumer S."/>
            <person name="Fricke W.F."/>
            <person name="Wiezer A."/>
            <person name="Liesegang H."/>
            <person name="Decker I."/>
            <person name="Herzberg C."/>
            <person name="Martinez-Arias R."/>
            <person name="Merkl R."/>
            <person name="Henne A."/>
            <person name="Gottschalk G."/>
        </authorList>
    </citation>
    <scope>NUCLEOTIDE SEQUENCE [LARGE SCALE GENOMIC DNA]</scope>
    <source>
        <strain>Massachusetts / E88</strain>
    </source>
</reference>
<gene>
    <name evidence="1" type="primary">pyrE</name>
    <name type="ordered locus">CTC_02378</name>
</gene>
<proteinExistence type="inferred from homology"/>
<feature type="chain" id="PRO_0000110690" description="Orotate phosphoribosyltransferase">
    <location>
        <begin position="1"/>
        <end position="193"/>
    </location>
</feature>
<feature type="binding site" evidence="1">
    <location>
        <begin position="116"/>
        <end position="124"/>
    </location>
    <ligand>
        <name>5-phospho-alpha-D-ribose 1-diphosphate</name>
        <dbReference type="ChEBI" id="CHEBI:58017"/>
    </ligand>
</feature>
<feature type="binding site" evidence="1">
    <location>
        <position position="120"/>
    </location>
    <ligand>
        <name>orotate</name>
        <dbReference type="ChEBI" id="CHEBI:30839"/>
    </ligand>
</feature>
<feature type="binding site" evidence="1">
    <location>
        <position position="148"/>
    </location>
    <ligand>
        <name>orotate</name>
        <dbReference type="ChEBI" id="CHEBI:30839"/>
    </ligand>
</feature>
<protein>
    <recommendedName>
        <fullName evidence="1">Orotate phosphoribosyltransferase</fullName>
        <shortName evidence="1">OPRT</shortName>
        <shortName evidence="1">OPRTase</shortName>
        <ecNumber evidence="1">2.4.2.10</ecNumber>
    </recommendedName>
</protein>
<organism>
    <name type="scientific">Clostridium tetani (strain Massachusetts / E88)</name>
    <dbReference type="NCBI Taxonomy" id="212717"/>
    <lineage>
        <taxon>Bacteria</taxon>
        <taxon>Bacillati</taxon>
        <taxon>Bacillota</taxon>
        <taxon>Clostridia</taxon>
        <taxon>Eubacteriales</taxon>
        <taxon>Clostridiaceae</taxon>
        <taxon>Clostridium</taxon>
    </lineage>
</organism>
<comment type="function">
    <text evidence="1">Catalyzes the transfer of a ribosyl phosphate group from 5-phosphoribose 1-diphosphate to orotate, leading to the formation of orotidine monophosphate (OMP).</text>
</comment>
<comment type="catalytic activity">
    <reaction evidence="1">
        <text>orotidine 5'-phosphate + diphosphate = orotate + 5-phospho-alpha-D-ribose 1-diphosphate</text>
        <dbReference type="Rhea" id="RHEA:10380"/>
        <dbReference type="ChEBI" id="CHEBI:30839"/>
        <dbReference type="ChEBI" id="CHEBI:33019"/>
        <dbReference type="ChEBI" id="CHEBI:57538"/>
        <dbReference type="ChEBI" id="CHEBI:58017"/>
        <dbReference type="EC" id="2.4.2.10"/>
    </reaction>
</comment>
<comment type="cofactor">
    <cofactor evidence="1">
        <name>Mg(2+)</name>
        <dbReference type="ChEBI" id="CHEBI:18420"/>
    </cofactor>
</comment>
<comment type="pathway">
    <text evidence="1">Pyrimidine metabolism; UMP biosynthesis via de novo pathway; UMP from orotate: step 1/2.</text>
</comment>
<comment type="subunit">
    <text evidence="1">Homodimer.</text>
</comment>
<comment type="similarity">
    <text evidence="1">Belongs to the purine/pyrimidine phosphoribosyltransferase family. PyrE subfamily.</text>
</comment>
<name>PYRE_CLOTE</name>
<keyword id="KW-0328">Glycosyltransferase</keyword>
<keyword id="KW-0460">Magnesium</keyword>
<keyword id="KW-0665">Pyrimidine biosynthesis</keyword>
<keyword id="KW-1185">Reference proteome</keyword>
<keyword id="KW-0808">Transferase</keyword>
<evidence type="ECO:0000255" key="1">
    <source>
        <dbReference type="HAMAP-Rule" id="MF_01208"/>
    </source>
</evidence>
<dbReference type="EC" id="2.4.2.10" evidence="1"/>
<dbReference type="EMBL" id="AE015927">
    <property type="protein sequence ID" value="AAO36851.1"/>
    <property type="molecule type" value="Genomic_DNA"/>
</dbReference>
<dbReference type="RefSeq" id="WP_011100512.1">
    <property type="nucleotide sequence ID" value="NC_004557.1"/>
</dbReference>
<dbReference type="SMR" id="Q891J4"/>
<dbReference type="STRING" id="212717.CTC_02378"/>
<dbReference type="GeneID" id="24252766"/>
<dbReference type="KEGG" id="ctc:CTC_02378"/>
<dbReference type="HOGENOM" id="CLU_074878_3_0_9"/>
<dbReference type="OrthoDB" id="9783570at2"/>
<dbReference type="UniPathway" id="UPA00070">
    <property type="reaction ID" value="UER00119"/>
</dbReference>
<dbReference type="Proteomes" id="UP000001412">
    <property type="component" value="Chromosome"/>
</dbReference>
<dbReference type="GO" id="GO:0000287">
    <property type="term" value="F:magnesium ion binding"/>
    <property type="evidence" value="ECO:0007669"/>
    <property type="project" value="UniProtKB-UniRule"/>
</dbReference>
<dbReference type="GO" id="GO:0004588">
    <property type="term" value="F:orotate phosphoribosyltransferase activity"/>
    <property type="evidence" value="ECO:0007669"/>
    <property type="project" value="UniProtKB-UniRule"/>
</dbReference>
<dbReference type="GO" id="GO:0044205">
    <property type="term" value="P:'de novo' UMP biosynthetic process"/>
    <property type="evidence" value="ECO:0007669"/>
    <property type="project" value="UniProtKB-UniRule"/>
</dbReference>
<dbReference type="GO" id="GO:0019856">
    <property type="term" value="P:pyrimidine nucleobase biosynthetic process"/>
    <property type="evidence" value="ECO:0007669"/>
    <property type="project" value="InterPro"/>
</dbReference>
<dbReference type="CDD" id="cd06223">
    <property type="entry name" value="PRTases_typeI"/>
    <property type="match status" value="1"/>
</dbReference>
<dbReference type="Gene3D" id="3.40.50.2020">
    <property type="match status" value="1"/>
</dbReference>
<dbReference type="HAMAP" id="MF_01208">
    <property type="entry name" value="PyrE"/>
    <property type="match status" value="1"/>
</dbReference>
<dbReference type="InterPro" id="IPR023031">
    <property type="entry name" value="OPRT"/>
</dbReference>
<dbReference type="InterPro" id="IPR006273">
    <property type="entry name" value="Orotate_PRibTrfase_bac"/>
</dbReference>
<dbReference type="InterPro" id="IPR000836">
    <property type="entry name" value="PRibTrfase_dom"/>
</dbReference>
<dbReference type="InterPro" id="IPR029057">
    <property type="entry name" value="PRTase-like"/>
</dbReference>
<dbReference type="NCBIfam" id="TIGR01367">
    <property type="entry name" value="pyrE_Therm"/>
    <property type="match status" value="1"/>
</dbReference>
<dbReference type="PANTHER" id="PTHR19278">
    <property type="entry name" value="OROTATE PHOSPHORIBOSYLTRANSFERASE"/>
    <property type="match status" value="1"/>
</dbReference>
<dbReference type="PANTHER" id="PTHR19278:SF9">
    <property type="entry name" value="URIDINE 5'-MONOPHOSPHATE SYNTHASE"/>
    <property type="match status" value="1"/>
</dbReference>
<dbReference type="Pfam" id="PF00156">
    <property type="entry name" value="Pribosyltran"/>
    <property type="match status" value="1"/>
</dbReference>
<dbReference type="SUPFAM" id="SSF53271">
    <property type="entry name" value="PRTase-like"/>
    <property type="match status" value="1"/>
</dbReference>
<sequence>MENKNEFIIDILKECSALLEGHFLLSSGRHSDKYCQCAKLLQYPDKAEKVLKVVVDKIKDLDFDMVVGPAMGGIIVAYELGRQLKKPNIFTERQEGVMTLRRGFEIQKGKKVIITEDVVTTGKSSLEVAKLIEKLGGEVVAICSIVDRRDDNIELPYNLYSSVKIDVKSYEEKDCPLCKEGLEYIKPGSRNIK</sequence>
<accession>Q891J4</accession>